<organism>
    <name type="scientific">Solanum lycopersicum</name>
    <name type="common">Tomato</name>
    <name type="synonym">Lycopersicon esculentum</name>
    <dbReference type="NCBI Taxonomy" id="4081"/>
    <lineage>
        <taxon>Eukaryota</taxon>
        <taxon>Viridiplantae</taxon>
        <taxon>Streptophyta</taxon>
        <taxon>Embryophyta</taxon>
        <taxon>Tracheophyta</taxon>
        <taxon>Spermatophyta</taxon>
        <taxon>Magnoliopsida</taxon>
        <taxon>eudicotyledons</taxon>
        <taxon>Gunneridae</taxon>
        <taxon>Pentapetalae</taxon>
        <taxon>asterids</taxon>
        <taxon>lamiids</taxon>
        <taxon>Solanales</taxon>
        <taxon>Solanaceae</taxon>
        <taxon>Solanoideae</taxon>
        <taxon>Solaneae</taxon>
        <taxon>Solanum</taxon>
        <taxon>Solanum subgen. Lycopersicon</taxon>
    </lineage>
</organism>
<keyword id="KW-0210">Decarboxylase</keyword>
<keyword id="KW-0456">Lyase</keyword>
<keyword id="KW-0460">Magnesium</keyword>
<keyword id="KW-0661">Putrescine biosynthesis</keyword>
<keyword id="KW-0663">Pyridoxal phosphate</keyword>
<keyword id="KW-1185">Reference proteome</keyword>
<keyword id="KW-0745">Spermidine biosynthesis</keyword>
<comment type="catalytic activity">
    <reaction>
        <text>L-arginine + H(+) = agmatine + CO2</text>
        <dbReference type="Rhea" id="RHEA:17641"/>
        <dbReference type="ChEBI" id="CHEBI:15378"/>
        <dbReference type="ChEBI" id="CHEBI:16526"/>
        <dbReference type="ChEBI" id="CHEBI:32682"/>
        <dbReference type="ChEBI" id="CHEBI:58145"/>
        <dbReference type="EC" id="4.1.1.19"/>
    </reaction>
</comment>
<comment type="cofactor">
    <cofactor>
        <name>pyridoxal 5'-phosphate</name>
        <dbReference type="ChEBI" id="CHEBI:597326"/>
    </cofactor>
</comment>
<comment type="cofactor">
    <cofactor>
        <name>Mg(2+)</name>
        <dbReference type="ChEBI" id="CHEBI:18420"/>
    </cofactor>
</comment>
<comment type="pathway">
    <text>Amine and polyamine biosynthesis; agmatine biosynthesis; agmatine from L-arginine: step 1/1.</text>
</comment>
<comment type="similarity">
    <text evidence="2">Belongs to the Orn/Lys/Arg decarboxylase class-II family. SpeA subfamily.</text>
</comment>
<proteinExistence type="evidence at transcript level"/>
<accession>P49726</accession>
<feature type="chain" id="PRO_0000149951" description="Arginine decarboxylase">
    <location>
        <begin position="1"/>
        <end position="502"/>
    </location>
</feature>
<feature type="binding site" evidence="1">
    <location>
        <begin position="226"/>
        <end position="236"/>
    </location>
    <ligand>
        <name>substrate</name>
    </ligand>
</feature>
<feature type="modified residue" description="N6-(pyridoxal phosphate)lysine" evidence="1">
    <location>
        <position position="42"/>
    </location>
</feature>
<name>SPE1_SOLLC</name>
<sequence>MPLVVRFPDVLKNRLETLQSAFDMAINSQGYEAHYQGVYPVKCNQDRFVVEDIVKFGSPYRFGLEAGSKPELLLAMNCLSKGSADALLVCNGFKDTEYISLALVARKLLLNSVIVLEQEEELDLVIDISRKMSVRPVIGLRAKLRTKHSGHFGSTSGEKGKFGLTTTQILRVVKKLDESGMLDCLQLLHFHIGSQIPTTELLADGVGEATQIYSELVRLGAGMKFIDIGGGLGIDYDGSKSSNSDVSVCYSIEEYASAVVQAVLYVCDRKGGKHPVICSESGRAIVSHHSILIFEAVSASTSHVSTQPSSGGLQSLVETLNEDARADYRNLSAAAVRGEYDTCLIYSDQLKQRCVEQFKDGSLDIEQLAAVDSICDWVSKAIGVADPVRTYHVNLSVFTSIPDFWGFSQLFPIVPIHRLDEKPTMRGILSDLTCDSDGKVDKFIGGESSLPLHEIGSGDGGRYYLGMFLGGAYEEALGGLHNLFGGPSVVRVMQSDSPHSFA</sequence>
<dbReference type="EC" id="4.1.1.19"/>
<dbReference type="EMBL" id="L16582">
    <property type="protein sequence ID" value="AAA61347.1"/>
    <property type="molecule type" value="mRNA"/>
</dbReference>
<dbReference type="PIR" id="JQ2341">
    <property type="entry name" value="JQ2341"/>
</dbReference>
<dbReference type="SMR" id="P49726"/>
<dbReference type="STRING" id="4081.P49726"/>
<dbReference type="PaxDb" id="4081-Solyc01g110440.2.1"/>
<dbReference type="eggNOG" id="ENOG502QTXD">
    <property type="taxonomic scope" value="Eukaryota"/>
</dbReference>
<dbReference type="InParanoid" id="P49726"/>
<dbReference type="BioCyc" id="MetaCyc:MONOMER-14985"/>
<dbReference type="UniPathway" id="UPA00186">
    <property type="reaction ID" value="UER00284"/>
</dbReference>
<dbReference type="Proteomes" id="UP000004994">
    <property type="component" value="Unplaced"/>
</dbReference>
<dbReference type="ExpressionAtlas" id="P49726">
    <property type="expression patterns" value="baseline and differential"/>
</dbReference>
<dbReference type="GO" id="GO:0008792">
    <property type="term" value="F:arginine decarboxylase activity"/>
    <property type="evidence" value="ECO:0000318"/>
    <property type="project" value="GO_Central"/>
</dbReference>
<dbReference type="GO" id="GO:0006527">
    <property type="term" value="P:arginine catabolic process"/>
    <property type="evidence" value="ECO:0007669"/>
    <property type="project" value="InterPro"/>
</dbReference>
<dbReference type="GO" id="GO:0009446">
    <property type="term" value="P:putrescine biosynthetic process"/>
    <property type="evidence" value="ECO:0007669"/>
    <property type="project" value="UniProtKB-KW"/>
</dbReference>
<dbReference type="GO" id="GO:0008295">
    <property type="term" value="P:spermidine biosynthetic process"/>
    <property type="evidence" value="ECO:0007669"/>
    <property type="project" value="UniProtKB-KW"/>
</dbReference>
<dbReference type="CDD" id="cd06830">
    <property type="entry name" value="PLPDE_III_ADC"/>
    <property type="match status" value="1"/>
</dbReference>
<dbReference type="FunFam" id="1.20.58.930:FF:000003">
    <property type="entry name" value="Arginine decarboxylase"/>
    <property type="match status" value="1"/>
</dbReference>
<dbReference type="FunFam" id="3.20.20.10:FF:000001">
    <property type="entry name" value="Biosynthetic arginine decarboxylase"/>
    <property type="match status" value="1"/>
</dbReference>
<dbReference type="Gene3D" id="1.20.58.930">
    <property type="match status" value="1"/>
</dbReference>
<dbReference type="Gene3D" id="3.20.20.10">
    <property type="entry name" value="Alanine racemase"/>
    <property type="match status" value="1"/>
</dbReference>
<dbReference type="Gene3D" id="2.40.37.10">
    <property type="entry name" value="Lyase, Ornithine Decarboxylase, Chain A, domain 1"/>
    <property type="match status" value="1"/>
</dbReference>
<dbReference type="InterPro" id="IPR009006">
    <property type="entry name" value="Ala_racemase/Decarboxylase_C"/>
</dbReference>
<dbReference type="InterPro" id="IPR002985">
    <property type="entry name" value="Arg_decrbxlase"/>
</dbReference>
<dbReference type="InterPro" id="IPR022657">
    <property type="entry name" value="De-COase2_CS"/>
</dbReference>
<dbReference type="InterPro" id="IPR022644">
    <property type="entry name" value="De-COase2_N"/>
</dbReference>
<dbReference type="InterPro" id="IPR022653">
    <property type="entry name" value="De-COase2_pyr-phos_BS"/>
</dbReference>
<dbReference type="InterPro" id="IPR000183">
    <property type="entry name" value="Orn/DAP/Arg_de-COase"/>
</dbReference>
<dbReference type="InterPro" id="IPR029066">
    <property type="entry name" value="PLP-binding_barrel"/>
</dbReference>
<dbReference type="NCBIfam" id="NF003763">
    <property type="entry name" value="PRK05354.1"/>
    <property type="match status" value="1"/>
</dbReference>
<dbReference type="NCBIfam" id="TIGR01273">
    <property type="entry name" value="speA"/>
    <property type="match status" value="1"/>
</dbReference>
<dbReference type="PANTHER" id="PTHR43295">
    <property type="entry name" value="ARGININE DECARBOXYLASE"/>
    <property type="match status" value="1"/>
</dbReference>
<dbReference type="PANTHER" id="PTHR43295:SF7">
    <property type="entry name" value="ARGININE DECARBOXYLASE"/>
    <property type="match status" value="1"/>
</dbReference>
<dbReference type="Pfam" id="PF02784">
    <property type="entry name" value="Orn_Arg_deC_N"/>
    <property type="match status" value="1"/>
</dbReference>
<dbReference type="PRINTS" id="PR01180">
    <property type="entry name" value="ARGDCRBXLASE"/>
</dbReference>
<dbReference type="PRINTS" id="PR01179">
    <property type="entry name" value="ODADCRBXLASE"/>
</dbReference>
<dbReference type="SUPFAM" id="SSF50621">
    <property type="entry name" value="Alanine racemase C-terminal domain-like"/>
    <property type="match status" value="1"/>
</dbReference>
<dbReference type="SUPFAM" id="SSF51419">
    <property type="entry name" value="PLP-binding barrel"/>
    <property type="match status" value="1"/>
</dbReference>
<dbReference type="PROSITE" id="PS00878">
    <property type="entry name" value="ODR_DC_2_1"/>
    <property type="match status" value="1"/>
</dbReference>
<dbReference type="PROSITE" id="PS00879">
    <property type="entry name" value="ODR_DC_2_2"/>
    <property type="match status" value="1"/>
</dbReference>
<reference key="1">
    <citation type="journal article" date="1993" name="Plant Physiol.">
        <title>Cloning of tomato (Lycopersicon esculentum Mill.) arginine decarboxylase gene and its expression during fruit ripening.</title>
        <authorList>
            <person name="Rastogi R."/>
            <person name="Dulson J."/>
            <person name="Rothstein S.J."/>
        </authorList>
    </citation>
    <scope>NUCLEOTIDE SEQUENCE [MRNA]</scope>
    <source>
        <tissue>Pericarp</tissue>
    </source>
</reference>
<protein>
    <recommendedName>
        <fullName>Arginine decarboxylase</fullName>
        <shortName>ADC</shortName>
        <shortName>ARGDC</shortName>
        <ecNumber>4.1.1.19</ecNumber>
    </recommendedName>
</protein>
<evidence type="ECO:0000250" key="1"/>
<evidence type="ECO:0000305" key="2"/>